<proteinExistence type="evidence at protein level"/>
<organism>
    <name type="scientific">Mus musculus</name>
    <name type="common">Mouse</name>
    <dbReference type="NCBI Taxonomy" id="10090"/>
    <lineage>
        <taxon>Eukaryota</taxon>
        <taxon>Metazoa</taxon>
        <taxon>Chordata</taxon>
        <taxon>Craniata</taxon>
        <taxon>Vertebrata</taxon>
        <taxon>Euteleostomi</taxon>
        <taxon>Mammalia</taxon>
        <taxon>Eutheria</taxon>
        <taxon>Euarchontoglires</taxon>
        <taxon>Glires</taxon>
        <taxon>Rodentia</taxon>
        <taxon>Myomorpha</taxon>
        <taxon>Muroidea</taxon>
        <taxon>Muridae</taxon>
        <taxon>Murinae</taxon>
        <taxon>Mus</taxon>
        <taxon>Mus</taxon>
    </lineage>
</organism>
<reference key="1">
    <citation type="submission" date="1997-08" db="EMBL/GenBank/DDBJ databases">
        <authorList>
            <person name="Inoue T."/>
            <person name="Kizawa K."/>
        </authorList>
    </citation>
    <scope>NUCLEOTIDE SEQUENCE [MRNA]</scope>
    <source>
        <strain>ICR</strain>
        <tissue>Hair follicle</tissue>
        <tissue>Skin</tissue>
    </source>
</reference>
<reference key="2">
    <citation type="journal article" date="2005" name="Science">
        <title>The transcriptional landscape of the mammalian genome.</title>
        <authorList>
            <person name="Carninci P."/>
            <person name="Kasukawa T."/>
            <person name="Katayama S."/>
            <person name="Gough J."/>
            <person name="Frith M.C."/>
            <person name="Maeda N."/>
            <person name="Oyama R."/>
            <person name="Ravasi T."/>
            <person name="Lenhard B."/>
            <person name="Wells C."/>
            <person name="Kodzius R."/>
            <person name="Shimokawa K."/>
            <person name="Bajic V.B."/>
            <person name="Brenner S.E."/>
            <person name="Batalov S."/>
            <person name="Forrest A.R."/>
            <person name="Zavolan M."/>
            <person name="Davis M.J."/>
            <person name="Wilming L.G."/>
            <person name="Aidinis V."/>
            <person name="Allen J.E."/>
            <person name="Ambesi-Impiombato A."/>
            <person name="Apweiler R."/>
            <person name="Aturaliya R.N."/>
            <person name="Bailey T.L."/>
            <person name="Bansal M."/>
            <person name="Baxter L."/>
            <person name="Beisel K.W."/>
            <person name="Bersano T."/>
            <person name="Bono H."/>
            <person name="Chalk A.M."/>
            <person name="Chiu K.P."/>
            <person name="Choudhary V."/>
            <person name="Christoffels A."/>
            <person name="Clutterbuck D.R."/>
            <person name="Crowe M.L."/>
            <person name="Dalla E."/>
            <person name="Dalrymple B.P."/>
            <person name="de Bono B."/>
            <person name="Della Gatta G."/>
            <person name="di Bernardo D."/>
            <person name="Down T."/>
            <person name="Engstrom P."/>
            <person name="Fagiolini M."/>
            <person name="Faulkner G."/>
            <person name="Fletcher C.F."/>
            <person name="Fukushima T."/>
            <person name="Furuno M."/>
            <person name="Futaki S."/>
            <person name="Gariboldi M."/>
            <person name="Georgii-Hemming P."/>
            <person name="Gingeras T.R."/>
            <person name="Gojobori T."/>
            <person name="Green R.E."/>
            <person name="Gustincich S."/>
            <person name="Harbers M."/>
            <person name="Hayashi Y."/>
            <person name="Hensch T.K."/>
            <person name="Hirokawa N."/>
            <person name="Hill D."/>
            <person name="Huminiecki L."/>
            <person name="Iacono M."/>
            <person name="Ikeo K."/>
            <person name="Iwama A."/>
            <person name="Ishikawa T."/>
            <person name="Jakt M."/>
            <person name="Kanapin A."/>
            <person name="Katoh M."/>
            <person name="Kawasawa Y."/>
            <person name="Kelso J."/>
            <person name="Kitamura H."/>
            <person name="Kitano H."/>
            <person name="Kollias G."/>
            <person name="Krishnan S.P."/>
            <person name="Kruger A."/>
            <person name="Kummerfeld S.K."/>
            <person name="Kurochkin I.V."/>
            <person name="Lareau L.F."/>
            <person name="Lazarevic D."/>
            <person name="Lipovich L."/>
            <person name="Liu J."/>
            <person name="Liuni S."/>
            <person name="McWilliam S."/>
            <person name="Madan Babu M."/>
            <person name="Madera M."/>
            <person name="Marchionni L."/>
            <person name="Matsuda H."/>
            <person name="Matsuzawa S."/>
            <person name="Miki H."/>
            <person name="Mignone F."/>
            <person name="Miyake S."/>
            <person name="Morris K."/>
            <person name="Mottagui-Tabar S."/>
            <person name="Mulder N."/>
            <person name="Nakano N."/>
            <person name="Nakauchi H."/>
            <person name="Ng P."/>
            <person name="Nilsson R."/>
            <person name="Nishiguchi S."/>
            <person name="Nishikawa S."/>
            <person name="Nori F."/>
            <person name="Ohara O."/>
            <person name="Okazaki Y."/>
            <person name="Orlando V."/>
            <person name="Pang K.C."/>
            <person name="Pavan W.J."/>
            <person name="Pavesi G."/>
            <person name="Pesole G."/>
            <person name="Petrovsky N."/>
            <person name="Piazza S."/>
            <person name="Reed J."/>
            <person name="Reid J.F."/>
            <person name="Ring B.Z."/>
            <person name="Ringwald M."/>
            <person name="Rost B."/>
            <person name="Ruan Y."/>
            <person name="Salzberg S.L."/>
            <person name="Sandelin A."/>
            <person name="Schneider C."/>
            <person name="Schoenbach C."/>
            <person name="Sekiguchi K."/>
            <person name="Semple C.A."/>
            <person name="Seno S."/>
            <person name="Sessa L."/>
            <person name="Sheng Y."/>
            <person name="Shibata Y."/>
            <person name="Shimada H."/>
            <person name="Shimada K."/>
            <person name="Silva D."/>
            <person name="Sinclair B."/>
            <person name="Sperling S."/>
            <person name="Stupka E."/>
            <person name="Sugiura K."/>
            <person name="Sultana R."/>
            <person name="Takenaka Y."/>
            <person name="Taki K."/>
            <person name="Tammoja K."/>
            <person name="Tan S.L."/>
            <person name="Tang S."/>
            <person name="Taylor M.S."/>
            <person name="Tegner J."/>
            <person name="Teichmann S.A."/>
            <person name="Ueda H.R."/>
            <person name="van Nimwegen E."/>
            <person name="Verardo R."/>
            <person name="Wei C.L."/>
            <person name="Yagi K."/>
            <person name="Yamanishi H."/>
            <person name="Zabarovsky E."/>
            <person name="Zhu S."/>
            <person name="Zimmer A."/>
            <person name="Hide W."/>
            <person name="Bult C."/>
            <person name="Grimmond S.M."/>
            <person name="Teasdale R.D."/>
            <person name="Liu E.T."/>
            <person name="Brusic V."/>
            <person name="Quackenbush J."/>
            <person name="Wahlestedt C."/>
            <person name="Mattick J.S."/>
            <person name="Hume D.A."/>
            <person name="Kai C."/>
            <person name="Sasaki D."/>
            <person name="Tomaru Y."/>
            <person name="Fukuda S."/>
            <person name="Kanamori-Katayama M."/>
            <person name="Suzuki M."/>
            <person name="Aoki J."/>
            <person name="Arakawa T."/>
            <person name="Iida J."/>
            <person name="Imamura K."/>
            <person name="Itoh M."/>
            <person name="Kato T."/>
            <person name="Kawaji H."/>
            <person name="Kawagashira N."/>
            <person name="Kawashima T."/>
            <person name="Kojima M."/>
            <person name="Kondo S."/>
            <person name="Konno H."/>
            <person name="Nakano K."/>
            <person name="Ninomiya N."/>
            <person name="Nishio T."/>
            <person name="Okada M."/>
            <person name="Plessy C."/>
            <person name="Shibata K."/>
            <person name="Shiraki T."/>
            <person name="Suzuki S."/>
            <person name="Tagami M."/>
            <person name="Waki K."/>
            <person name="Watahiki A."/>
            <person name="Okamura-Oho Y."/>
            <person name="Suzuki H."/>
            <person name="Kawai J."/>
            <person name="Hayashizaki Y."/>
        </authorList>
    </citation>
    <scope>NUCLEOTIDE SEQUENCE [LARGE SCALE MRNA]</scope>
    <source>
        <strain>C57BL/6J</strain>
        <tissue>Skin</tissue>
        <tissue>Tongue</tissue>
    </source>
</reference>
<reference key="3">
    <citation type="journal article" date="2010" name="Cell">
        <title>A tissue-specific atlas of mouse protein phosphorylation and expression.</title>
        <authorList>
            <person name="Huttlin E.L."/>
            <person name="Jedrychowski M.P."/>
            <person name="Elias J.E."/>
            <person name="Goswami T."/>
            <person name="Rad R."/>
            <person name="Beausoleil S.A."/>
            <person name="Villen J."/>
            <person name="Haas W."/>
            <person name="Sowa M.E."/>
            <person name="Gygi S.P."/>
        </authorList>
    </citation>
    <scope>IDENTIFICATION BY MASS SPECTROMETRY [LARGE SCALE ANALYSIS]</scope>
    <source>
        <tissue>Heart</tissue>
        <tissue>Kidney</tissue>
        <tissue>Liver</tissue>
        <tissue>Lung</tissue>
    </source>
</reference>
<dbReference type="EMBL" id="AF021836">
    <property type="protein sequence ID" value="AAD01692.1"/>
    <property type="molecule type" value="mRNA"/>
</dbReference>
<dbReference type="EMBL" id="AK028825">
    <property type="protein sequence ID" value="BAC26139.1"/>
    <property type="molecule type" value="mRNA"/>
</dbReference>
<dbReference type="EMBL" id="AK009099">
    <property type="protein sequence ID" value="BAB26069.1"/>
    <property type="molecule type" value="mRNA"/>
</dbReference>
<dbReference type="RefSeq" id="NP_058575.2">
    <property type="nucleotide sequence ID" value="NM_016879.2"/>
</dbReference>
<dbReference type="SMR" id="Q9Z2T6"/>
<dbReference type="BioGRID" id="207339">
    <property type="interactions" value="1"/>
</dbReference>
<dbReference type="FunCoup" id="Q9Z2T6">
    <property type="interactions" value="14"/>
</dbReference>
<dbReference type="iPTMnet" id="Q9Z2T6"/>
<dbReference type="PhosphoSitePlus" id="Q9Z2T6"/>
<dbReference type="SwissPalm" id="Q9Z2T6"/>
<dbReference type="jPOST" id="Q9Z2T6"/>
<dbReference type="PeptideAtlas" id="Q9Z2T6"/>
<dbReference type="ProteomicsDB" id="264872"/>
<dbReference type="Antibodypedia" id="56660">
    <property type="antibodies" value="40 antibodies from 16 providers"/>
</dbReference>
<dbReference type="DNASU" id="53622"/>
<dbReference type="Ensembl" id="ENSMUST00000230067.3">
    <property type="protein sequence ID" value="ENSMUSP00000155398.3"/>
    <property type="gene ID" value="ENSMUSG00000116336.3"/>
</dbReference>
<dbReference type="GeneID" id="53622"/>
<dbReference type="KEGG" id="mmu:53622"/>
<dbReference type="UCSC" id="uc007xtf.3">
    <property type="organism name" value="mouse"/>
</dbReference>
<dbReference type="AGR" id="MGI:1859268"/>
<dbReference type="CTD" id="3891"/>
<dbReference type="MGI" id="MGI:1859268">
    <property type="gene designation" value="Krt85"/>
</dbReference>
<dbReference type="GeneTree" id="ENSGT00940000162337"/>
<dbReference type="InParanoid" id="Q9Z2T6"/>
<dbReference type="OMA" id="CRSYRIN"/>
<dbReference type="OrthoDB" id="9440123at2759"/>
<dbReference type="PhylomeDB" id="Q9Z2T6"/>
<dbReference type="Reactome" id="R-MMU-6805567">
    <property type="pathway name" value="Keratinization"/>
</dbReference>
<dbReference type="Reactome" id="R-MMU-6809371">
    <property type="pathway name" value="Formation of the cornified envelope"/>
</dbReference>
<dbReference type="BioGRID-ORCS" id="53622">
    <property type="hits" value="2 hits in 15 CRISPR screens"/>
</dbReference>
<dbReference type="PRO" id="PR:Q9Z2T6"/>
<dbReference type="Proteomes" id="UP000000589">
    <property type="component" value="Chromosome 15"/>
</dbReference>
<dbReference type="RNAct" id="Q9Z2T6">
    <property type="molecule type" value="protein"/>
</dbReference>
<dbReference type="Bgee" id="ENSMUSG00000116336">
    <property type="expression patterns" value="Expressed in lip and 6 other cell types or tissues"/>
</dbReference>
<dbReference type="ExpressionAtlas" id="Q9Z2T6">
    <property type="expression patterns" value="baseline and differential"/>
</dbReference>
<dbReference type="GO" id="GO:0045095">
    <property type="term" value="C:keratin filament"/>
    <property type="evidence" value="ECO:0007669"/>
    <property type="project" value="InterPro"/>
</dbReference>
<dbReference type="FunFam" id="1.20.5.1160:FF:000001">
    <property type="entry name" value="Keratin type II"/>
    <property type="match status" value="1"/>
</dbReference>
<dbReference type="FunFam" id="1.20.5.170:FF:000004">
    <property type="entry name" value="Keratin, type II cytoskeletal 5"/>
    <property type="match status" value="1"/>
</dbReference>
<dbReference type="FunFam" id="1.20.5.500:FF:000001">
    <property type="entry name" value="Type II keratin 23"/>
    <property type="match status" value="1"/>
</dbReference>
<dbReference type="Gene3D" id="1.20.5.170">
    <property type="match status" value="1"/>
</dbReference>
<dbReference type="Gene3D" id="1.20.5.500">
    <property type="entry name" value="Single helix bin"/>
    <property type="match status" value="1"/>
</dbReference>
<dbReference type="Gene3D" id="1.20.5.1160">
    <property type="entry name" value="Vasodilator-stimulated phosphoprotein"/>
    <property type="match status" value="1"/>
</dbReference>
<dbReference type="InterPro" id="IPR018039">
    <property type="entry name" value="IF_conserved"/>
</dbReference>
<dbReference type="InterPro" id="IPR039008">
    <property type="entry name" value="IF_rod_dom"/>
</dbReference>
<dbReference type="InterPro" id="IPR032444">
    <property type="entry name" value="Keratin_2_head"/>
</dbReference>
<dbReference type="InterPro" id="IPR003054">
    <property type="entry name" value="Keratin_II"/>
</dbReference>
<dbReference type="PANTHER" id="PTHR45616">
    <property type="entry name" value="GATA-TYPE DOMAIN-CONTAINING PROTEIN"/>
    <property type="match status" value="1"/>
</dbReference>
<dbReference type="PANTHER" id="PTHR45616:SF43">
    <property type="entry name" value="KERATIN, TYPE II CUTICULAR HB5"/>
    <property type="match status" value="1"/>
</dbReference>
<dbReference type="Pfam" id="PF00038">
    <property type="entry name" value="Filament"/>
    <property type="match status" value="1"/>
</dbReference>
<dbReference type="Pfam" id="PF16208">
    <property type="entry name" value="Keratin_2_head"/>
    <property type="match status" value="1"/>
</dbReference>
<dbReference type="PRINTS" id="PR01276">
    <property type="entry name" value="TYPE2KERATIN"/>
</dbReference>
<dbReference type="SMART" id="SM01391">
    <property type="entry name" value="Filament"/>
    <property type="match status" value="1"/>
</dbReference>
<dbReference type="SUPFAM" id="SSF64593">
    <property type="entry name" value="Intermediate filament protein, coiled coil region"/>
    <property type="match status" value="2"/>
</dbReference>
<dbReference type="PROSITE" id="PS00226">
    <property type="entry name" value="IF_ROD_1"/>
    <property type="match status" value="1"/>
</dbReference>
<dbReference type="PROSITE" id="PS51842">
    <property type="entry name" value="IF_ROD_2"/>
    <property type="match status" value="1"/>
</dbReference>
<accession>Q9Z2T6</accession>
<accession>Q8CE83</accession>
<accession>Q9D7M4</accession>
<gene>
    <name type="primary">Krt85</name>
    <name type="synonym">Krt2-18</name>
    <name type="synonym">Krthb5</name>
</gene>
<evidence type="ECO:0000250" key="1">
    <source>
        <dbReference type="UniProtKB" id="P78386"/>
    </source>
</evidence>
<evidence type="ECO:0000255" key="2">
    <source>
        <dbReference type="PROSITE-ProRule" id="PRU01188"/>
    </source>
</evidence>
<evidence type="ECO:0000305" key="3"/>
<comment type="subunit">
    <text>Heterotetramer of two type I and two type II keratins.</text>
</comment>
<comment type="miscellaneous">
    <text>There are two types of hair/microfibrillar keratin, I (acidic) and II (neutral to basic).</text>
</comment>
<comment type="similarity">
    <text evidence="2">Belongs to the intermediate filament family.</text>
</comment>
<feature type="chain" id="PRO_0000063703" description="Keratin, type II cuticular Hb5">
    <location>
        <begin position="1"/>
        <end position="507"/>
    </location>
</feature>
<feature type="domain" description="IF rod" evidence="2">
    <location>
        <begin position="123"/>
        <end position="434"/>
    </location>
</feature>
<feature type="region of interest" description="Head">
    <location>
        <begin position="1"/>
        <end position="123"/>
    </location>
</feature>
<feature type="region of interest" description="Coil 1A">
    <location>
        <begin position="124"/>
        <end position="158"/>
    </location>
</feature>
<feature type="region of interest" description="Linker 1">
    <location>
        <begin position="159"/>
        <end position="168"/>
    </location>
</feature>
<feature type="region of interest" description="Coil 1B">
    <location>
        <begin position="169"/>
        <end position="269"/>
    </location>
</feature>
<feature type="region of interest" description="Linker 12">
    <location>
        <begin position="270"/>
        <end position="286"/>
    </location>
</feature>
<feature type="region of interest" description="Coil 2">
    <location>
        <begin position="287"/>
        <end position="430"/>
    </location>
</feature>
<feature type="region of interest" description="Tail">
    <location>
        <begin position="431"/>
        <end position="507"/>
    </location>
</feature>
<feature type="cross-link" description="Glycyl lysine isopeptide (Lys-Gly) (interchain with G-Cter in SUMO1)" evidence="1">
    <location>
        <position position="229"/>
    </location>
</feature>
<feature type="sequence conflict" description="In Ref. 1; AAD01692." evidence="3" ref="1">
    <original>A</original>
    <variation>R</variation>
    <location>
        <position position="37"/>
    </location>
</feature>
<feature type="sequence conflict" description="In Ref. 1; AAD01692." evidence="3" ref="1">
    <original>E</original>
    <variation>G</variation>
    <location>
        <position position="261"/>
    </location>
</feature>
<feature type="sequence conflict" description="In Ref. 2; BAB26069." evidence="3" ref="2">
    <original>L</original>
    <variation>F</variation>
    <location>
        <position position="434"/>
    </location>
</feature>
<sequence length="507" mass="55759">MSCRSYRISPGCGVTRNFSSCSAVAPKTGNRCCISAAPFRGVSCYRGLTGFSSRSLCNPSPCGPRMAVGGFRSGSCGRSFGYRSGGVCGPSPPCITTVSVNESLLTPLNLEIDPNAQCVKYEEKEQIKCLNSKFAAFIDKVRFLEQQNKLLETKWQFYQNRKCCESNLEPLFGGYIEALRREAECVEADSGRLAAELNHVQEAMEGYKKKYEEEVALRATAENEFVVLKKDVDCAYLRKSDLEANVEALVEESSFLKRLYEEEVCVLQAHISDTSVIVKMDNSRDLNMDCVVAEIKAQYDDVASRSRAEAESWYRTKCEEMKATVIRHGETLRRTKEEINELNRMIQRLTAEIENAKCQRAKLEAAVAEAEQQGEAALADARCKLAELEGALQKAKQDMACLLKEYQEVMNSKLALDIEIATYRRLLEGEEQRLCEGVGSVNVCVSSSRGGVTCGGLTYGTTPGRQIVSGPSVTGGSITVMAPDSCSPCQPRASSFTCGSSRSVRFA</sequence>
<keyword id="KW-0175">Coiled coil</keyword>
<keyword id="KW-0403">Intermediate filament</keyword>
<keyword id="KW-1017">Isopeptide bond</keyword>
<keyword id="KW-0416">Keratin</keyword>
<keyword id="KW-1185">Reference proteome</keyword>
<keyword id="KW-0832">Ubl conjugation</keyword>
<protein>
    <recommendedName>
        <fullName>Keratin, type II cuticular Hb5</fullName>
    </recommendedName>
    <alternativeName>
        <fullName>Keratin-85</fullName>
        <shortName>K85</shortName>
    </alternativeName>
    <alternativeName>
        <fullName>Type II hair keratin Hb5</fullName>
    </alternativeName>
    <alternativeName>
        <fullName>Type-II keratin Kb25</fullName>
    </alternativeName>
</protein>
<name>KRT85_MOUSE</name>